<protein>
    <recommendedName>
        <fullName evidence="1">Small ribosomal subunit protein uS10</fullName>
    </recommendedName>
    <alternativeName>
        <fullName evidence="2">30S ribosomal protein S10</fullName>
    </alternativeName>
</protein>
<sequence length="103" mass="11736">MQNQRIRIRLKAFDHRLIDQATAEIVETAKRTGAQVRGPIPLPTRKERFTVLISPHVNKDARDQYEIRTHLRLVDIVEPTEKTVDALMRLDLAAGVDVQISLG</sequence>
<accession>A8A5C6</accession>
<keyword id="KW-0687">Ribonucleoprotein</keyword>
<keyword id="KW-0689">Ribosomal protein</keyword>
<comment type="function">
    <text evidence="1">Involved in the binding of tRNA to the ribosomes.</text>
</comment>
<comment type="subunit">
    <text evidence="1">Part of the 30S ribosomal subunit.</text>
</comment>
<comment type="similarity">
    <text evidence="1">Belongs to the universal ribosomal protein uS10 family.</text>
</comment>
<gene>
    <name evidence="1" type="primary">rpsJ</name>
    <name type="ordered locus">EcHS_A3515</name>
</gene>
<organism>
    <name type="scientific">Escherichia coli O9:H4 (strain HS)</name>
    <dbReference type="NCBI Taxonomy" id="331112"/>
    <lineage>
        <taxon>Bacteria</taxon>
        <taxon>Pseudomonadati</taxon>
        <taxon>Pseudomonadota</taxon>
        <taxon>Gammaproteobacteria</taxon>
        <taxon>Enterobacterales</taxon>
        <taxon>Enterobacteriaceae</taxon>
        <taxon>Escherichia</taxon>
    </lineage>
</organism>
<proteinExistence type="inferred from homology"/>
<evidence type="ECO:0000255" key="1">
    <source>
        <dbReference type="HAMAP-Rule" id="MF_00508"/>
    </source>
</evidence>
<evidence type="ECO:0000305" key="2"/>
<name>RS10_ECOHS</name>
<feature type="chain" id="PRO_1000060857" description="Small ribosomal subunit protein uS10">
    <location>
        <begin position="1"/>
        <end position="103"/>
    </location>
</feature>
<dbReference type="EMBL" id="CP000802">
    <property type="protein sequence ID" value="ABV07730.1"/>
    <property type="molecule type" value="Genomic_DNA"/>
</dbReference>
<dbReference type="RefSeq" id="WP_001181004.1">
    <property type="nucleotide sequence ID" value="NC_009800.1"/>
</dbReference>
<dbReference type="SMR" id="A8A5C6"/>
<dbReference type="GeneID" id="93778666"/>
<dbReference type="KEGG" id="ecx:EcHS_A3515"/>
<dbReference type="HOGENOM" id="CLU_122625_1_3_6"/>
<dbReference type="GO" id="GO:1990904">
    <property type="term" value="C:ribonucleoprotein complex"/>
    <property type="evidence" value="ECO:0007669"/>
    <property type="project" value="UniProtKB-KW"/>
</dbReference>
<dbReference type="GO" id="GO:0005840">
    <property type="term" value="C:ribosome"/>
    <property type="evidence" value="ECO:0007669"/>
    <property type="project" value="UniProtKB-KW"/>
</dbReference>
<dbReference type="GO" id="GO:0003735">
    <property type="term" value="F:structural constituent of ribosome"/>
    <property type="evidence" value="ECO:0007669"/>
    <property type="project" value="InterPro"/>
</dbReference>
<dbReference type="GO" id="GO:0000049">
    <property type="term" value="F:tRNA binding"/>
    <property type="evidence" value="ECO:0007669"/>
    <property type="project" value="UniProtKB-UniRule"/>
</dbReference>
<dbReference type="GO" id="GO:0006412">
    <property type="term" value="P:translation"/>
    <property type="evidence" value="ECO:0007669"/>
    <property type="project" value="UniProtKB-UniRule"/>
</dbReference>
<dbReference type="FunFam" id="3.30.70.600:FF:000001">
    <property type="entry name" value="30S ribosomal protein S10"/>
    <property type="match status" value="1"/>
</dbReference>
<dbReference type="Gene3D" id="3.30.70.600">
    <property type="entry name" value="Ribosomal protein S10 domain"/>
    <property type="match status" value="1"/>
</dbReference>
<dbReference type="HAMAP" id="MF_00508">
    <property type="entry name" value="Ribosomal_uS10"/>
    <property type="match status" value="1"/>
</dbReference>
<dbReference type="InterPro" id="IPR001848">
    <property type="entry name" value="Ribosomal_uS10"/>
</dbReference>
<dbReference type="InterPro" id="IPR018268">
    <property type="entry name" value="Ribosomal_uS10_CS"/>
</dbReference>
<dbReference type="InterPro" id="IPR027486">
    <property type="entry name" value="Ribosomal_uS10_dom"/>
</dbReference>
<dbReference type="InterPro" id="IPR036838">
    <property type="entry name" value="Ribosomal_uS10_dom_sf"/>
</dbReference>
<dbReference type="NCBIfam" id="NF001861">
    <property type="entry name" value="PRK00596.1"/>
    <property type="match status" value="1"/>
</dbReference>
<dbReference type="NCBIfam" id="TIGR01049">
    <property type="entry name" value="rpsJ_bact"/>
    <property type="match status" value="1"/>
</dbReference>
<dbReference type="PANTHER" id="PTHR11700">
    <property type="entry name" value="30S RIBOSOMAL PROTEIN S10 FAMILY MEMBER"/>
    <property type="match status" value="1"/>
</dbReference>
<dbReference type="Pfam" id="PF00338">
    <property type="entry name" value="Ribosomal_S10"/>
    <property type="match status" value="1"/>
</dbReference>
<dbReference type="PRINTS" id="PR00971">
    <property type="entry name" value="RIBOSOMALS10"/>
</dbReference>
<dbReference type="SMART" id="SM01403">
    <property type="entry name" value="Ribosomal_S10"/>
    <property type="match status" value="1"/>
</dbReference>
<dbReference type="SUPFAM" id="SSF54999">
    <property type="entry name" value="Ribosomal protein S10"/>
    <property type="match status" value="1"/>
</dbReference>
<dbReference type="PROSITE" id="PS00361">
    <property type="entry name" value="RIBOSOMAL_S10"/>
    <property type="match status" value="1"/>
</dbReference>
<reference key="1">
    <citation type="journal article" date="2008" name="J. Bacteriol.">
        <title>The pangenome structure of Escherichia coli: comparative genomic analysis of E. coli commensal and pathogenic isolates.</title>
        <authorList>
            <person name="Rasko D.A."/>
            <person name="Rosovitz M.J."/>
            <person name="Myers G.S.A."/>
            <person name="Mongodin E.F."/>
            <person name="Fricke W.F."/>
            <person name="Gajer P."/>
            <person name="Crabtree J."/>
            <person name="Sebaihia M."/>
            <person name="Thomson N.R."/>
            <person name="Chaudhuri R."/>
            <person name="Henderson I.R."/>
            <person name="Sperandio V."/>
            <person name="Ravel J."/>
        </authorList>
    </citation>
    <scope>NUCLEOTIDE SEQUENCE [LARGE SCALE GENOMIC DNA]</scope>
    <source>
        <strain>HS</strain>
    </source>
</reference>